<gene>
    <name type="primary">rps3</name>
</gene>
<proteinExistence type="inferred from homology"/>
<name>RR3_VITVI</name>
<keyword id="KW-0150">Chloroplast</keyword>
<keyword id="KW-0934">Plastid</keyword>
<keyword id="KW-1185">Reference proteome</keyword>
<keyword id="KW-0687">Ribonucleoprotein</keyword>
<keyword id="KW-0689">Ribosomal protein</keyword>
<keyword id="KW-0694">RNA-binding</keyword>
<keyword id="KW-0699">rRNA-binding</keyword>
<dbReference type="EMBL" id="DQ424856">
    <property type="protein sequence ID" value="ABE47572.1"/>
    <property type="molecule type" value="Genomic_DNA"/>
</dbReference>
<dbReference type="RefSeq" id="YP_567116.1">
    <property type="nucleotide sequence ID" value="NC_007957.1"/>
</dbReference>
<dbReference type="SMR" id="Q0ZIY0"/>
<dbReference type="FunCoup" id="Q0ZIY0">
    <property type="interactions" value="287"/>
</dbReference>
<dbReference type="STRING" id="29760.Q0ZIY0"/>
<dbReference type="GeneID" id="4025021"/>
<dbReference type="KEGG" id="vvi:4025021"/>
<dbReference type="InParanoid" id="Q0ZIY0"/>
<dbReference type="OrthoDB" id="889101at71240"/>
<dbReference type="Proteomes" id="UP000009183">
    <property type="component" value="Chloroplast"/>
</dbReference>
<dbReference type="GO" id="GO:0009507">
    <property type="term" value="C:chloroplast"/>
    <property type="evidence" value="ECO:0007669"/>
    <property type="project" value="UniProtKB-SubCell"/>
</dbReference>
<dbReference type="GO" id="GO:0022627">
    <property type="term" value="C:cytosolic small ribosomal subunit"/>
    <property type="evidence" value="ECO:0000318"/>
    <property type="project" value="GO_Central"/>
</dbReference>
<dbReference type="GO" id="GO:0019843">
    <property type="term" value="F:rRNA binding"/>
    <property type="evidence" value="ECO:0007669"/>
    <property type="project" value="UniProtKB-UniRule"/>
</dbReference>
<dbReference type="GO" id="GO:0003735">
    <property type="term" value="F:structural constituent of ribosome"/>
    <property type="evidence" value="ECO:0000318"/>
    <property type="project" value="GO_Central"/>
</dbReference>
<dbReference type="GO" id="GO:0006412">
    <property type="term" value="P:translation"/>
    <property type="evidence" value="ECO:0007669"/>
    <property type="project" value="UniProtKB-UniRule"/>
</dbReference>
<dbReference type="CDD" id="cd02412">
    <property type="entry name" value="KH-II_30S_S3"/>
    <property type="match status" value="1"/>
</dbReference>
<dbReference type="FunFam" id="3.30.1140.32:FF:000003">
    <property type="entry name" value="30S ribosomal protein S3, chloroplastic"/>
    <property type="match status" value="1"/>
</dbReference>
<dbReference type="FunFam" id="3.30.300.20:FF:000008">
    <property type="entry name" value="30S ribosomal protein S3, chloroplastic"/>
    <property type="match status" value="1"/>
</dbReference>
<dbReference type="Gene3D" id="3.30.300.20">
    <property type="match status" value="1"/>
</dbReference>
<dbReference type="Gene3D" id="3.30.1140.32">
    <property type="entry name" value="Ribosomal protein S3, C-terminal domain"/>
    <property type="match status" value="1"/>
</dbReference>
<dbReference type="HAMAP" id="MF_01309_B">
    <property type="entry name" value="Ribosomal_uS3_B"/>
    <property type="match status" value="1"/>
</dbReference>
<dbReference type="InterPro" id="IPR015946">
    <property type="entry name" value="KH_dom-like_a/b"/>
</dbReference>
<dbReference type="InterPro" id="IPR004044">
    <property type="entry name" value="KH_dom_type_2"/>
</dbReference>
<dbReference type="InterPro" id="IPR009019">
    <property type="entry name" value="KH_sf_prok-type"/>
</dbReference>
<dbReference type="InterPro" id="IPR036419">
    <property type="entry name" value="Ribosomal_S3_C_sf"/>
</dbReference>
<dbReference type="InterPro" id="IPR005704">
    <property type="entry name" value="Ribosomal_uS3_bac-typ"/>
</dbReference>
<dbReference type="InterPro" id="IPR001351">
    <property type="entry name" value="Ribosomal_uS3_C"/>
</dbReference>
<dbReference type="InterPro" id="IPR018280">
    <property type="entry name" value="Ribosomal_uS3_CS"/>
</dbReference>
<dbReference type="NCBIfam" id="TIGR01009">
    <property type="entry name" value="rpsC_bact"/>
    <property type="match status" value="1"/>
</dbReference>
<dbReference type="PANTHER" id="PTHR11760">
    <property type="entry name" value="30S/40S RIBOSOMAL PROTEIN S3"/>
    <property type="match status" value="1"/>
</dbReference>
<dbReference type="PANTHER" id="PTHR11760:SF19">
    <property type="entry name" value="SMALL RIBOSOMAL SUBUNIT PROTEIN US3C"/>
    <property type="match status" value="1"/>
</dbReference>
<dbReference type="Pfam" id="PF00189">
    <property type="entry name" value="Ribosomal_S3_C"/>
    <property type="match status" value="1"/>
</dbReference>
<dbReference type="SUPFAM" id="SSF54814">
    <property type="entry name" value="Prokaryotic type KH domain (KH-domain type II)"/>
    <property type="match status" value="1"/>
</dbReference>
<dbReference type="SUPFAM" id="SSF54821">
    <property type="entry name" value="Ribosomal protein S3 C-terminal domain"/>
    <property type="match status" value="1"/>
</dbReference>
<dbReference type="PROSITE" id="PS50823">
    <property type="entry name" value="KH_TYPE_2"/>
    <property type="match status" value="1"/>
</dbReference>
<dbReference type="PROSITE" id="PS00548">
    <property type="entry name" value="RIBOSOMAL_S3"/>
    <property type="match status" value="1"/>
</dbReference>
<geneLocation type="chloroplast"/>
<evidence type="ECO:0000250" key="1"/>
<evidence type="ECO:0000305" key="2"/>
<comment type="subunit">
    <text evidence="1">Part of the 30S ribosomal subunit.</text>
</comment>
<comment type="subcellular location">
    <subcellularLocation>
        <location>Plastid</location>
        <location>Chloroplast</location>
    </subcellularLocation>
</comment>
<comment type="similarity">
    <text evidence="2">Belongs to the universal ribosomal protein uS3 family.</text>
</comment>
<sequence>MGQKINPLGFRLGTTQGHHSLWFAQPKNYSKGLQEDQKIRDCIKNYVQKNIRISSGVEGIARIEIQKRIDLIQVIIYMGFPKLLVEGKPRRIEELQMNVQKELNYVNRKLNIAITRITKPYGHPNILAEFIAGQLRNRVSFRKAIKKAIELTEQADTKGIQVQIAGRIDGKEIARVEWIREGRVPLQTIRAKIDYCSYRVRTIYGVLGIKIWIFVDEE</sequence>
<organism>
    <name type="scientific">Vitis vinifera</name>
    <name type="common">Grape</name>
    <dbReference type="NCBI Taxonomy" id="29760"/>
    <lineage>
        <taxon>Eukaryota</taxon>
        <taxon>Viridiplantae</taxon>
        <taxon>Streptophyta</taxon>
        <taxon>Embryophyta</taxon>
        <taxon>Tracheophyta</taxon>
        <taxon>Spermatophyta</taxon>
        <taxon>Magnoliopsida</taxon>
        <taxon>eudicotyledons</taxon>
        <taxon>Gunneridae</taxon>
        <taxon>Pentapetalae</taxon>
        <taxon>rosids</taxon>
        <taxon>Vitales</taxon>
        <taxon>Vitaceae</taxon>
        <taxon>Viteae</taxon>
        <taxon>Vitis</taxon>
    </lineage>
</organism>
<protein>
    <recommendedName>
        <fullName evidence="2">Small ribosomal subunit protein uS3c</fullName>
    </recommendedName>
    <alternativeName>
        <fullName>30S ribosomal protein S3, chloroplastic</fullName>
    </alternativeName>
</protein>
<reference key="1">
    <citation type="journal article" date="2006" name="BMC Evol. Biol.">
        <title>Phylogenetic analyses of Vitis (Vitaceae) based on complete chloroplast genome sequences: effects of taxon sampling and phylogenetic methods on resolving relationships among rosids.</title>
        <authorList>
            <person name="Jansen R.K."/>
            <person name="Kaittanis C."/>
            <person name="Lee S.-B."/>
            <person name="Saski C."/>
            <person name="Tomkins J."/>
            <person name="Alverson A.J."/>
            <person name="Daniell H."/>
        </authorList>
    </citation>
    <scope>NUCLEOTIDE SEQUENCE [LARGE SCALE GENOMIC DNA]</scope>
    <source>
        <strain>cv. Maxxa</strain>
    </source>
</reference>
<feature type="chain" id="PRO_0000277001" description="Small ribosomal subunit protein uS3c">
    <location>
        <begin position="1"/>
        <end position="218"/>
    </location>
</feature>
<feature type="domain" description="KH type-2">
    <location>
        <begin position="47"/>
        <end position="118"/>
    </location>
</feature>
<accession>Q0ZIY0</accession>